<reference key="1">
    <citation type="journal article" date="2001" name="DNA Res.">
        <title>Complete genomic sequence of the filamentous nitrogen-fixing cyanobacterium Anabaena sp. strain PCC 7120.</title>
        <authorList>
            <person name="Kaneko T."/>
            <person name="Nakamura Y."/>
            <person name="Wolk C.P."/>
            <person name="Kuritz T."/>
            <person name="Sasamoto S."/>
            <person name="Watanabe A."/>
            <person name="Iriguchi M."/>
            <person name="Ishikawa A."/>
            <person name="Kawashima K."/>
            <person name="Kimura T."/>
            <person name="Kishida Y."/>
            <person name="Kohara M."/>
            <person name="Matsumoto M."/>
            <person name="Matsuno A."/>
            <person name="Muraki A."/>
            <person name="Nakazaki N."/>
            <person name="Shimpo S."/>
            <person name="Sugimoto M."/>
            <person name="Takazawa M."/>
            <person name="Yamada M."/>
            <person name="Yasuda M."/>
            <person name="Tabata S."/>
        </authorList>
    </citation>
    <scope>NUCLEOTIDE SEQUENCE [LARGE SCALE GENOMIC DNA]</scope>
    <source>
        <strain>PCC 7120 / SAG 25.82 / UTEX 2576</strain>
    </source>
</reference>
<reference key="2">
    <citation type="journal article" date="2020" name="BMC Microbiol.">
        <title>The model cyanobacteria Anabaena sp. PCC 7120 possess an intact but partially degenerated gene cluster encoding gas vesicles.</title>
        <authorList>
            <person name="Cai K."/>
            <person name="Xu B.Y."/>
            <person name="Jiang Y.L."/>
            <person name="Wang Y."/>
            <person name="Chen Y."/>
            <person name="Zhou C.Z."/>
            <person name="Li Q."/>
        </authorList>
    </citation>
    <scope>INDUCTION</scope>
    <scope>LACK OF GAS VESICLES IN VIVO</scope>
    <scope>FUNCTION IN E.COLI</scope>
    <source>
        <strain>PCC 7120 / SAG 25.82 / UTEX 2576</strain>
    </source>
</reference>
<evidence type="ECO:0000250" key="1"/>
<evidence type="ECO:0000255" key="2">
    <source>
        <dbReference type="HAMAP-Rule" id="MF_00576"/>
    </source>
</evidence>
<evidence type="ECO:0000269" key="3">
    <source>
    </source>
</evidence>
<evidence type="ECO:0000303" key="4">
    <source>
    </source>
</evidence>
<evidence type="ECO:0000303" key="5">
    <source>
    </source>
</evidence>
<evidence type="ECO:0000305" key="6"/>
<feature type="initiator methionine" description="Removed" evidence="1">
    <location>
        <position position="1"/>
    </location>
</feature>
<feature type="chain" id="PRO_0000199979" description="Gas vesicle protein A">
    <location>
        <begin position="2"/>
        <end position="71"/>
    </location>
</feature>
<organism>
    <name type="scientific">Nostoc sp. (strain PCC 7120 / SAG 25.82 / UTEX 2576)</name>
    <dbReference type="NCBI Taxonomy" id="103690"/>
    <lineage>
        <taxon>Bacteria</taxon>
        <taxon>Bacillati</taxon>
        <taxon>Cyanobacteriota</taxon>
        <taxon>Cyanophyceae</taxon>
        <taxon>Nostocales</taxon>
        <taxon>Nostocaceae</taxon>
        <taxon>Nostoc</taxon>
    </lineage>
</organism>
<protein>
    <recommendedName>
        <fullName evidence="2">Gas vesicle protein A</fullName>
        <shortName evidence="2">GvpA</shortName>
    </recommendedName>
</protein>
<comment type="function">
    <text evidence="2">Gas vesicles are hollow, gas filled proteinaceous nanostructures found in some microorganisms. During planktonic growth they allow positioning of the organism at a favorable depth for light or nutrient acquisition. GvpA forms the protein shell.</text>
</comment>
<comment type="function">
    <text evidence="3">Cluster expression in E.coli (gvpA1-gvpA2-gvpC-gvpN-gvpJ-gvpK-gvpF-gvpG-gvpV-gvpW) allows cells to float and produces irregularly shaped gas vesicles.</text>
</comment>
<comment type="subunit">
    <text evidence="2">The gas vesicle shell is 2 nm thick and consists of a single layer of this protein. It forms helical ribs nearly perpendicular to the long axis of the vesicle.</text>
</comment>
<comment type="subcellular location">
    <subcellularLocation>
        <location evidence="2">Gas vesicle shell</location>
    </subcellularLocation>
</comment>
<comment type="induction">
    <text evidence="3">Constitutively transcribed when grown in a 12 hour light/dark regime at 2000 umol photon/m(2)/s; decreased light, growth at 38 degrees Celsius or both increased transcripts up to 23-fold.</text>
</comment>
<comment type="similarity">
    <text evidence="2 6">Belongs to the gas vesicle GvpA family.</text>
</comment>
<comment type="caution">
    <text evidence="3">Despite the presence of an intact gas vesicle cluster and gvpA transcripts, there is no evidence this strain produces gas vesicles.</text>
</comment>
<name>GVPA_NOSS1</name>
<proteinExistence type="evidence at protein level"/>
<accession>Q8XFU1</accession>
<keyword id="KW-0304">Gas vesicle</keyword>
<keyword id="KW-1185">Reference proteome</keyword>
<gene>
    <name evidence="2 4" type="primary">gvpA</name>
    <name type="ordered locus">asl2254</name>
</gene>
<gene>
    <name evidence="5" type="primary">gvpA2</name>
    <name evidence="4" type="synonym">gvpB</name>
    <name type="ordered locus">asl2253</name>
</gene>
<sequence length="71" mass="7547">MAVEKTNSSSSLAEVIDRILDKGIVVDAWVRVSLVGIELLAIEARIVIASVETYLKYAEAVGLTQSAAMPA</sequence>
<dbReference type="EMBL" id="BA000019">
    <property type="protein sequence ID" value="BAB73953.1"/>
    <property type="molecule type" value="Genomic_DNA"/>
</dbReference>
<dbReference type="EMBL" id="BA000019">
    <property type="protein sequence ID" value="BAB73952.1"/>
    <property type="molecule type" value="Genomic_DNA"/>
</dbReference>
<dbReference type="PIR" id="AF2087">
    <property type="entry name" value="AF2087"/>
</dbReference>
<dbReference type="PIR" id="AG2087">
    <property type="entry name" value="AG2087"/>
</dbReference>
<dbReference type="RefSeq" id="WP_010996411.1">
    <property type="nucleotide sequence ID" value="NZ_RSCN01000004.1"/>
</dbReference>
<dbReference type="SMR" id="Q8XFU1"/>
<dbReference type="STRING" id="103690.gene:10494282"/>
<dbReference type="GeneID" id="58722719"/>
<dbReference type="KEGG" id="ana:asl2253"/>
<dbReference type="KEGG" id="ana:asl2254"/>
<dbReference type="eggNOG" id="ENOG5032YMQ">
    <property type="taxonomic scope" value="Bacteria"/>
</dbReference>
<dbReference type="OrthoDB" id="284387at2"/>
<dbReference type="Proteomes" id="UP000002483">
    <property type="component" value="Chromosome"/>
</dbReference>
<dbReference type="GO" id="GO:0033172">
    <property type="term" value="C:gas vesicle shell"/>
    <property type="evidence" value="ECO:0007669"/>
    <property type="project" value="UniProtKB-UniRule"/>
</dbReference>
<dbReference type="GO" id="GO:0012506">
    <property type="term" value="C:vesicle membrane"/>
    <property type="evidence" value="ECO:0007669"/>
    <property type="project" value="InterPro"/>
</dbReference>
<dbReference type="GO" id="GO:0005198">
    <property type="term" value="F:structural molecule activity"/>
    <property type="evidence" value="ECO:0007669"/>
    <property type="project" value="InterPro"/>
</dbReference>
<dbReference type="HAMAP" id="MF_00576">
    <property type="entry name" value="Gas_vesicle_A"/>
    <property type="match status" value="1"/>
</dbReference>
<dbReference type="InterPro" id="IPR000638">
    <property type="entry name" value="Gas-vesicle_GvpA-like"/>
</dbReference>
<dbReference type="InterPro" id="IPR047870">
    <property type="entry name" value="Gas_vesicle_GvpA"/>
</dbReference>
<dbReference type="InterPro" id="IPR050530">
    <property type="entry name" value="GvpA"/>
</dbReference>
<dbReference type="InterPro" id="IPR018493">
    <property type="entry name" value="GvpA-like_CS"/>
</dbReference>
<dbReference type="NCBIfam" id="NF006874">
    <property type="entry name" value="PRK09371.1"/>
    <property type="match status" value="1"/>
</dbReference>
<dbReference type="PANTHER" id="PTHR35344:SF4">
    <property type="entry name" value="GAS VESICLE PROTEIN A1"/>
    <property type="match status" value="1"/>
</dbReference>
<dbReference type="PANTHER" id="PTHR35344">
    <property type="entry name" value="GAS VESICLE STRUCTURAL PROTEIN 2-RELATED"/>
    <property type="match status" value="1"/>
</dbReference>
<dbReference type="Pfam" id="PF00741">
    <property type="entry name" value="Gas_vesicle"/>
    <property type="match status" value="1"/>
</dbReference>
<dbReference type="PROSITE" id="PS00234">
    <property type="entry name" value="GAS_VESICLE_A_1"/>
    <property type="match status" value="1"/>
</dbReference>
<dbReference type="PROSITE" id="PS00669">
    <property type="entry name" value="GAS_VESICLE_A_2"/>
    <property type="match status" value="1"/>
</dbReference>